<protein>
    <recommendedName>
        <fullName evidence="1">Glutamate--tRNA ligase</fullName>
        <ecNumber evidence="1">6.1.1.17</ecNumber>
    </recommendedName>
    <alternativeName>
        <fullName evidence="1">Glutamyl-tRNA synthetase</fullName>
        <shortName evidence="1">GluRS</shortName>
    </alternativeName>
</protein>
<evidence type="ECO:0000255" key="1">
    <source>
        <dbReference type="HAMAP-Rule" id="MF_00022"/>
    </source>
</evidence>
<dbReference type="EC" id="6.1.1.17" evidence="1"/>
<dbReference type="EMBL" id="CP001056">
    <property type="protein sequence ID" value="ACD24781.1"/>
    <property type="molecule type" value="Genomic_DNA"/>
</dbReference>
<dbReference type="SMR" id="B2TND7"/>
<dbReference type="KEGG" id="cbk:CLL_A2555"/>
<dbReference type="PATRIC" id="fig|935198.13.peg.2511"/>
<dbReference type="HOGENOM" id="CLU_015768_6_3_9"/>
<dbReference type="Proteomes" id="UP000001195">
    <property type="component" value="Chromosome"/>
</dbReference>
<dbReference type="GO" id="GO:0005737">
    <property type="term" value="C:cytoplasm"/>
    <property type="evidence" value="ECO:0007669"/>
    <property type="project" value="UniProtKB-SubCell"/>
</dbReference>
<dbReference type="GO" id="GO:0005524">
    <property type="term" value="F:ATP binding"/>
    <property type="evidence" value="ECO:0007669"/>
    <property type="project" value="UniProtKB-UniRule"/>
</dbReference>
<dbReference type="GO" id="GO:0004818">
    <property type="term" value="F:glutamate-tRNA ligase activity"/>
    <property type="evidence" value="ECO:0007669"/>
    <property type="project" value="UniProtKB-UniRule"/>
</dbReference>
<dbReference type="GO" id="GO:0000049">
    <property type="term" value="F:tRNA binding"/>
    <property type="evidence" value="ECO:0007669"/>
    <property type="project" value="InterPro"/>
</dbReference>
<dbReference type="GO" id="GO:0008270">
    <property type="term" value="F:zinc ion binding"/>
    <property type="evidence" value="ECO:0007669"/>
    <property type="project" value="UniProtKB-UniRule"/>
</dbReference>
<dbReference type="GO" id="GO:0006424">
    <property type="term" value="P:glutamyl-tRNA aminoacylation"/>
    <property type="evidence" value="ECO:0007669"/>
    <property type="project" value="UniProtKB-UniRule"/>
</dbReference>
<dbReference type="CDD" id="cd00808">
    <property type="entry name" value="GluRS_core"/>
    <property type="match status" value="1"/>
</dbReference>
<dbReference type="FunFam" id="3.40.50.620:FF:000045">
    <property type="entry name" value="Glutamate--tRNA ligase, mitochondrial"/>
    <property type="match status" value="1"/>
</dbReference>
<dbReference type="Gene3D" id="1.10.10.350">
    <property type="match status" value="1"/>
</dbReference>
<dbReference type="Gene3D" id="3.40.50.620">
    <property type="entry name" value="HUPs"/>
    <property type="match status" value="1"/>
</dbReference>
<dbReference type="HAMAP" id="MF_00022">
    <property type="entry name" value="Glu_tRNA_synth_type1"/>
    <property type="match status" value="1"/>
</dbReference>
<dbReference type="InterPro" id="IPR045462">
    <property type="entry name" value="aa-tRNA-synth_I_cd-bd"/>
</dbReference>
<dbReference type="InterPro" id="IPR020751">
    <property type="entry name" value="aa-tRNA-synth_I_codon-bd_sub2"/>
</dbReference>
<dbReference type="InterPro" id="IPR001412">
    <property type="entry name" value="aa-tRNA-synth_I_CS"/>
</dbReference>
<dbReference type="InterPro" id="IPR008925">
    <property type="entry name" value="aa_tRNA-synth_I_cd-bd_sf"/>
</dbReference>
<dbReference type="InterPro" id="IPR004527">
    <property type="entry name" value="Glu-tRNA-ligase_bac/mito"/>
</dbReference>
<dbReference type="InterPro" id="IPR000924">
    <property type="entry name" value="Glu/Gln-tRNA-synth"/>
</dbReference>
<dbReference type="InterPro" id="IPR020058">
    <property type="entry name" value="Glu/Gln-tRNA-synth_Ib_cat-dom"/>
</dbReference>
<dbReference type="InterPro" id="IPR049940">
    <property type="entry name" value="GluQ/Sye"/>
</dbReference>
<dbReference type="InterPro" id="IPR033910">
    <property type="entry name" value="GluRS_core"/>
</dbReference>
<dbReference type="InterPro" id="IPR014729">
    <property type="entry name" value="Rossmann-like_a/b/a_fold"/>
</dbReference>
<dbReference type="NCBIfam" id="TIGR00464">
    <property type="entry name" value="gltX_bact"/>
    <property type="match status" value="1"/>
</dbReference>
<dbReference type="PANTHER" id="PTHR43311">
    <property type="entry name" value="GLUTAMATE--TRNA LIGASE"/>
    <property type="match status" value="1"/>
</dbReference>
<dbReference type="PANTHER" id="PTHR43311:SF2">
    <property type="entry name" value="GLUTAMATE--TRNA LIGASE, MITOCHONDRIAL-RELATED"/>
    <property type="match status" value="1"/>
</dbReference>
<dbReference type="Pfam" id="PF19269">
    <property type="entry name" value="Anticodon_2"/>
    <property type="match status" value="1"/>
</dbReference>
<dbReference type="Pfam" id="PF00749">
    <property type="entry name" value="tRNA-synt_1c"/>
    <property type="match status" value="1"/>
</dbReference>
<dbReference type="PRINTS" id="PR00987">
    <property type="entry name" value="TRNASYNTHGLU"/>
</dbReference>
<dbReference type="SUPFAM" id="SSF48163">
    <property type="entry name" value="An anticodon-binding domain of class I aminoacyl-tRNA synthetases"/>
    <property type="match status" value="1"/>
</dbReference>
<dbReference type="SUPFAM" id="SSF52374">
    <property type="entry name" value="Nucleotidylyl transferase"/>
    <property type="match status" value="1"/>
</dbReference>
<dbReference type="PROSITE" id="PS00178">
    <property type="entry name" value="AA_TRNA_LIGASE_I"/>
    <property type="match status" value="1"/>
</dbReference>
<keyword id="KW-0030">Aminoacyl-tRNA synthetase</keyword>
<keyword id="KW-0067">ATP-binding</keyword>
<keyword id="KW-0963">Cytoplasm</keyword>
<keyword id="KW-0436">Ligase</keyword>
<keyword id="KW-0479">Metal-binding</keyword>
<keyword id="KW-0547">Nucleotide-binding</keyword>
<keyword id="KW-0648">Protein biosynthesis</keyword>
<keyword id="KW-0862">Zinc</keyword>
<proteinExistence type="inferred from homology"/>
<organism>
    <name type="scientific">Clostridium botulinum (strain Eklund 17B / Type B)</name>
    <dbReference type="NCBI Taxonomy" id="935198"/>
    <lineage>
        <taxon>Bacteria</taxon>
        <taxon>Bacillati</taxon>
        <taxon>Bacillota</taxon>
        <taxon>Clostridia</taxon>
        <taxon>Eubacteriales</taxon>
        <taxon>Clostridiaceae</taxon>
        <taxon>Clostridium</taxon>
    </lineage>
</organism>
<accession>B2TND7</accession>
<feature type="chain" id="PRO_0000367649" description="Glutamate--tRNA ligase">
    <location>
        <begin position="1"/>
        <end position="485"/>
    </location>
</feature>
<feature type="short sequence motif" description="'HIGH' region" evidence="1">
    <location>
        <begin position="12"/>
        <end position="22"/>
    </location>
</feature>
<feature type="short sequence motif" description="'KMSKS' region" evidence="1">
    <location>
        <begin position="253"/>
        <end position="257"/>
    </location>
</feature>
<feature type="binding site" evidence="1">
    <location>
        <position position="109"/>
    </location>
    <ligand>
        <name>Zn(2+)</name>
        <dbReference type="ChEBI" id="CHEBI:29105"/>
    </ligand>
</feature>
<feature type="binding site" evidence="1">
    <location>
        <position position="111"/>
    </location>
    <ligand>
        <name>Zn(2+)</name>
        <dbReference type="ChEBI" id="CHEBI:29105"/>
    </ligand>
</feature>
<feature type="binding site" evidence="1">
    <location>
        <position position="136"/>
    </location>
    <ligand>
        <name>Zn(2+)</name>
        <dbReference type="ChEBI" id="CHEBI:29105"/>
    </ligand>
</feature>
<feature type="binding site" evidence="1">
    <location>
        <position position="138"/>
    </location>
    <ligand>
        <name>Zn(2+)</name>
        <dbReference type="ChEBI" id="CHEBI:29105"/>
    </ligand>
</feature>
<feature type="binding site" evidence="1">
    <location>
        <position position="256"/>
    </location>
    <ligand>
        <name>ATP</name>
        <dbReference type="ChEBI" id="CHEBI:30616"/>
    </ligand>
</feature>
<reference key="1">
    <citation type="submission" date="2008-04" db="EMBL/GenBank/DDBJ databases">
        <title>Complete sequence of Clostridium botulinum strain Eklund.</title>
        <authorList>
            <person name="Brinkac L.M."/>
            <person name="Brown J.L."/>
            <person name="Bruce D."/>
            <person name="Detter C."/>
            <person name="Munk C."/>
            <person name="Smith L.A."/>
            <person name="Smith T.J."/>
            <person name="Sutton G."/>
            <person name="Brettin T.S."/>
        </authorList>
    </citation>
    <scope>NUCLEOTIDE SEQUENCE [LARGE SCALE GENOMIC DNA]</scope>
    <source>
        <strain>Eklund 17B / Type B</strain>
    </source>
</reference>
<sequence length="485" mass="55578">MASKKIRTRFAPSPTGYMHVGNLRTALYAYLIAKHEAGDFILRIEDTDQERLVDGAVDIIYNTLKLTGLNHDEGPDVGGEVGPYVQSERKAIYLEYAKNLVEKGEAYYCFCSKDRLDMLKENAEALKRPFKYDKHCLHLTKEEIEANLAKGLPYVIRQNNPTTGSTTFDDVIYGKITVDNSELEDMILIKSDGLPTYNFANVVDDHLMGITHVVRGNEYLSSSPKYNRLYEAFGWDVPIYVHCPPIMKDTHHKLSKRNGDASFEDLIQKGYLKEAVLNYIALLGWNPGTNEEIFSLEELTEKFDFKDISKSPAIFDDAKLKWMNGEYIRKLSLDEFHELAVPEYKKVLKKDFDLKFISDLLHTRCELLSDLADQIDFLEELPEYSTDLYVHKKMKSTVESSLENLEKVLPIIEEIDETNWNKDYIHEKVFELIKSLEIKNGQMLWPIRTALSGKSFTPGGAFELAILLGKEESISRLKKGIELLK</sequence>
<comment type="function">
    <text evidence="1">Catalyzes the attachment of glutamate to tRNA(Glu) in a two-step reaction: glutamate is first activated by ATP to form Glu-AMP and then transferred to the acceptor end of tRNA(Glu).</text>
</comment>
<comment type="catalytic activity">
    <reaction evidence="1">
        <text>tRNA(Glu) + L-glutamate + ATP = L-glutamyl-tRNA(Glu) + AMP + diphosphate</text>
        <dbReference type="Rhea" id="RHEA:23540"/>
        <dbReference type="Rhea" id="RHEA-COMP:9663"/>
        <dbReference type="Rhea" id="RHEA-COMP:9680"/>
        <dbReference type="ChEBI" id="CHEBI:29985"/>
        <dbReference type="ChEBI" id="CHEBI:30616"/>
        <dbReference type="ChEBI" id="CHEBI:33019"/>
        <dbReference type="ChEBI" id="CHEBI:78442"/>
        <dbReference type="ChEBI" id="CHEBI:78520"/>
        <dbReference type="ChEBI" id="CHEBI:456215"/>
        <dbReference type="EC" id="6.1.1.17"/>
    </reaction>
</comment>
<comment type="cofactor">
    <cofactor evidence="1">
        <name>Zn(2+)</name>
        <dbReference type="ChEBI" id="CHEBI:29105"/>
    </cofactor>
    <text evidence="1">Binds 1 zinc ion per subunit.</text>
</comment>
<comment type="subunit">
    <text evidence="1">Monomer.</text>
</comment>
<comment type="subcellular location">
    <subcellularLocation>
        <location evidence="1">Cytoplasm</location>
    </subcellularLocation>
</comment>
<comment type="similarity">
    <text evidence="1">Belongs to the class-I aminoacyl-tRNA synthetase family. Glutamate--tRNA ligase type 1 subfamily.</text>
</comment>
<gene>
    <name evidence="1" type="primary">gltX</name>
    <name type="ordered locus">CLL_A2555</name>
</gene>
<name>SYE_CLOBB</name>